<evidence type="ECO:0000250" key="1">
    <source>
        <dbReference type="UniProtKB" id="Q289M7"/>
    </source>
</evidence>
<evidence type="ECO:0000255" key="2">
    <source>
        <dbReference type="HAMAP-Rule" id="MF_04072"/>
    </source>
</evidence>
<evidence type="ECO:0000305" key="3"/>
<organismHost>
    <name type="scientific">Aves</name>
    <dbReference type="NCBI Taxonomy" id="8782"/>
</organismHost>
<organismHost>
    <name type="scientific">Homo sapiens</name>
    <name type="common">Human</name>
    <dbReference type="NCBI Taxonomy" id="9606"/>
</organismHost>
<organismHost>
    <name type="scientific">Sus scrofa</name>
    <name type="common">Pig</name>
    <dbReference type="NCBI Taxonomy" id="9823"/>
</organismHost>
<name>HEMA_I06A0</name>
<reference key="1">
    <citation type="submission" date="2008-07" db="EMBL/GenBank/DDBJ databases">
        <title>The NIAID influenza genome sequencing project.</title>
        <authorList>
            <person name="Spiro D."/>
            <person name="Halpin R."/>
            <person name="Boyne A."/>
            <person name="Bera J."/>
            <person name="Ghedin E."/>
            <person name="Hostetler J."/>
            <person name="Fedorova N."/>
            <person name="Hine E."/>
            <person name="Overton L."/>
            <person name="Djuric K."/>
            <person name="Sarmiento M."/>
            <person name="Sitz J."/>
            <person name="Katzel D."/>
            <person name="Manojkumar R."/>
            <person name="Devis R."/>
            <person name="Fulvini A."/>
            <person name="Silverman J."/>
            <person name="Le J."/>
            <person name="Kilbourne E.D."/>
            <person name="Pokorny B."/>
            <person name="Bucher D."/>
            <person name="Orff E."/>
            <person name="Minieri J."/>
            <person name="Onodera S."/>
            <person name="Huang L."/>
            <person name="Bao Y."/>
            <person name="Sanders R."/>
            <person name="Dernovoy D."/>
            <person name="Kiryutin B."/>
            <person name="Lipman D.J."/>
            <person name="Tatusova T."/>
        </authorList>
    </citation>
    <scope>NUCLEOTIDE SEQUENCE [GENOMIC RNA]</scope>
</reference>
<reference key="2">
    <citation type="submission" date="2008-07" db="EMBL/GenBank/DDBJ databases">
        <authorList>
            <consortium name="The NIAID Influenza Genome Sequencing Consortium"/>
        </authorList>
    </citation>
    <scope>NUCLEOTIDE SEQUENCE [GENOMIC RNA]</scope>
</reference>
<keyword id="KW-1167">Clathrin- and caveolin-independent endocytosis of virus by host</keyword>
<keyword id="KW-1165">Clathrin-mediated endocytosis of virus by host</keyword>
<keyword id="KW-1015">Disulfide bond</keyword>
<keyword id="KW-1170">Fusion of virus membrane with host endosomal membrane</keyword>
<keyword id="KW-1168">Fusion of virus membrane with host membrane</keyword>
<keyword id="KW-0325">Glycoprotein</keyword>
<keyword id="KW-0348">Hemagglutinin</keyword>
<keyword id="KW-1032">Host cell membrane</keyword>
<keyword id="KW-1043">Host membrane</keyword>
<keyword id="KW-0945">Host-virus interaction</keyword>
<keyword id="KW-0449">Lipoprotein</keyword>
<keyword id="KW-0472">Membrane</keyword>
<keyword id="KW-0564">Palmitate</keyword>
<keyword id="KW-0732">Signal</keyword>
<keyword id="KW-0812">Transmembrane</keyword>
<keyword id="KW-1133">Transmembrane helix</keyword>
<keyword id="KW-1161">Viral attachment to host cell</keyword>
<keyword id="KW-0261">Viral envelope protein</keyword>
<keyword id="KW-1162">Viral penetration into host cytoplasm</keyword>
<keyword id="KW-0946">Virion</keyword>
<keyword id="KW-1164">Virus endocytosis by host</keyword>
<keyword id="KW-1160">Virus entry into host cell</keyword>
<feature type="signal peptide" evidence="2">
    <location>
        <begin position="1"/>
        <end position="17"/>
    </location>
</feature>
<feature type="chain" id="PRO_0000440370" description="Hemagglutinin" evidence="2">
    <location>
        <begin position="18"/>
        <end position="565"/>
    </location>
</feature>
<feature type="chain" id="PRO_0000372869" description="Hemagglutinin HA1 chain" evidence="2">
    <location>
        <begin position="18"/>
        <end position="342"/>
    </location>
</feature>
<feature type="chain" id="PRO_0000372870" description="Hemagglutinin HA2 chain" evidence="2">
    <location>
        <begin position="344"/>
        <end position="565"/>
    </location>
</feature>
<feature type="topological domain" description="Extracellular" evidence="2">
    <location>
        <begin position="18"/>
        <end position="528"/>
    </location>
</feature>
<feature type="transmembrane region" description="Helical" evidence="2">
    <location>
        <begin position="529"/>
        <end position="549"/>
    </location>
</feature>
<feature type="topological domain" description="Cytoplasmic" evidence="2">
    <location>
        <begin position="550"/>
        <end position="565"/>
    </location>
</feature>
<feature type="site" description="Cleavage; by host" evidence="2">
    <location>
        <begin position="343"/>
        <end position="344"/>
    </location>
</feature>
<feature type="lipid moiety-binding region" description="S-palmitoyl cysteine; by host" evidence="2">
    <location>
        <position position="554"/>
    </location>
</feature>
<feature type="lipid moiety-binding region" description="S-palmitoyl cysteine; by host" evidence="2">
    <location>
        <position position="561"/>
    </location>
</feature>
<feature type="lipid moiety-binding region" description="S-palmitoyl cysteine; by host" evidence="2">
    <location>
        <position position="564"/>
    </location>
</feature>
<feature type="glycosylation site" description="N-linked (GlcNAc...) asparagine; by host" evidence="2">
    <location>
        <position position="27"/>
    </location>
</feature>
<feature type="glycosylation site" description="N-linked (GlcNAc...) asparagine; by host" evidence="2">
    <location>
        <position position="28"/>
    </location>
</feature>
<feature type="glycosylation site" description="N-linked (GlcNAc...) asparagine; by host" evidence="2">
    <location>
        <position position="40"/>
    </location>
</feature>
<feature type="glycosylation site" description="N-linked (GlcNAc...) asparagine; by host" evidence="2">
    <location>
        <position position="71"/>
    </location>
</feature>
<feature type="glycosylation site" description="N-linked (GlcNAc...) asparagine; by host" evidence="2">
    <location>
        <position position="104"/>
    </location>
</feature>
<feature type="glycosylation site" description="N-linked (GlcNAc...) asparagine; by host" evidence="2">
    <location>
        <position position="142"/>
    </location>
</feature>
<feature type="glycosylation site" description="N-linked (GlcNAc...) asparagine; by host" evidence="2">
    <location>
        <position position="176"/>
    </location>
</feature>
<feature type="glycosylation site" description="N-linked (GlcNAc...) asparagine; by host" evidence="2">
    <location>
        <position position="303"/>
    </location>
</feature>
<feature type="glycosylation site" description="N-linked (GlcNAc...) asparagine; by host" evidence="2">
    <location>
        <position position="497"/>
    </location>
</feature>
<feature type="disulfide bond" description="Interchain (between HA1 and HA2 chains)" evidence="2">
    <location>
        <begin position="21"/>
        <end position="480"/>
    </location>
</feature>
<feature type="disulfide bond" evidence="2">
    <location>
        <begin position="59"/>
        <end position="291"/>
    </location>
</feature>
<feature type="disulfide bond" evidence="2">
    <location>
        <begin position="72"/>
        <end position="84"/>
    </location>
</feature>
<feature type="disulfide bond" evidence="2">
    <location>
        <begin position="107"/>
        <end position="152"/>
    </location>
</feature>
<feature type="disulfide bond" evidence="2">
    <location>
        <begin position="295"/>
        <end position="319"/>
    </location>
</feature>
<feature type="disulfide bond" evidence="2">
    <location>
        <begin position="487"/>
        <end position="491"/>
    </location>
</feature>
<sequence length="565" mass="63157">MKVKLLVLLCTFTATYADTICIGYHANNSTDTVDTVLEKNVTVTHSVNLLEDSHNGKLCLLKGIAPLQLGNCSVAGWILGNPECELLISKESWSYIVEKPNPENGTCYPGHFADYEELREQLSSVSSFERFEIFPKESSWPNHTVTGVSASCSHNGKSSFYKNLLWLTGKNGLYPNLSKSYANNKEKEVLVLWGVHHPPNIGNQRALYHTENAYVSVVSSHYSRKFTPEIAKRPKVRDQEGRINYYWTLLEPGDTIIFEANGNLIAPRYAFALSRGFGSGIINSNAPMDECDAKCQTPQGAINSSLPFQNVHPVTIGECPKYVRSAKLRMVTGLRNIPSIQSRGLFGAIAGFIEGGWTGMVDGWYGYHHQNEQGSGYAADQKSTQNAINGITNKVNSVIEKMNTQFTAVGKEFNKLERRMENLNKKVDDGFIDVWTYNAELLVLLENERTLDFHDSNVKNLYEKVKSQLKNNAKEIGNGCFEFYHKCNDECMESVKNGTYDYPKYSEESKLSREKIDGVKLESMGVYQILAIYSTVASSLVLLVSLGAISFWMCSNGSLQCRICI</sequence>
<comment type="function">
    <text evidence="2">Binds to sialic acid-containing receptors on the cell surface, bringing about the attachment of the virus particle to the cell. This attachment induces virion internalization either through clathrin-dependent endocytosis or through clathrin- and caveolin-independent pathway. Plays a major role in the determination of host range restriction and virulence. Class I viral fusion protein. Responsible for penetration of the virus into the cell cytoplasm by mediating the fusion of the membrane of the endocytosed virus particle with the endosomal membrane. Low pH in endosomes induces an irreversible conformational change in HA2, releasing the fusion hydrophobic peptide. Several trimers are required to form a competent fusion pore.</text>
</comment>
<comment type="subunit">
    <text evidence="1">Homotrimer of disulfide-linked HA1-HA2. Interacts with human CACNA1C.</text>
</comment>
<comment type="subcellular location">
    <subcellularLocation>
        <location evidence="2">Virion membrane</location>
        <topology evidence="2">Single-pass type I membrane protein</topology>
    </subcellularLocation>
    <subcellularLocation>
        <location evidence="2">Host apical cell membrane</location>
        <topology evidence="2">Single-pass type I membrane protein</topology>
    </subcellularLocation>
    <text evidence="2">Targeted to the apical plasma membrane in epithelial polarized cells through a signal present in the transmembrane domain. Associated with glycosphingolipid- and cholesterol-enriched detergent-resistant lipid rafts.</text>
</comment>
<comment type="PTM">
    <text evidence="2">Palmitoylated.</text>
</comment>
<comment type="PTM">
    <text evidence="2">In natural infection, inactive HA is matured into HA1 and HA2 outside the cell by one or more trypsin-like, arginine-specific endoprotease secreted by the bronchial epithelial cells. One identified protease that may be involved in this process is secreted in lungs by club cells.</text>
</comment>
<comment type="miscellaneous">
    <text>Major glycoprotein, comprises over 80% of the envelope proteins present in virus particle.</text>
</comment>
<comment type="miscellaneous">
    <text>The extent of infection into host organism is determined by HA. Influenza viruses bud from the apical surface of polarized epithelial cells (e.g. bronchial epithelial cells) into lumen of lungs and are therefore usually pneumotropic. The reason is that HA is cleaved by tryptase clara which is restricted to lungs. However, HAs of H5 and H7 pantropic avian viruses subtypes can be cleaved by furin and subtilisin-type enzymes, allowing the virus to grow in other organs than lungs.</text>
</comment>
<comment type="miscellaneous">
    <text evidence="3">The influenza A genome consist of 8 RNA segments. Genetic variation of hemagglutinin and/or neuraminidase genes results in the emergence of new influenza strains. The mechanism of variation can be the result of point mutations or the result of genetic reassortment between segments of two different strains.</text>
</comment>
<comment type="similarity">
    <text evidence="2">Belongs to the influenza viruses hemagglutinin family.</text>
</comment>
<gene>
    <name evidence="2" type="primary">HA</name>
</gene>
<accession>B4URD6</accession>
<dbReference type="EMBL" id="CY034124">
    <property type="protein sequence ID" value="ACF54587.1"/>
    <property type="molecule type" value="Viral_cRNA"/>
</dbReference>
<dbReference type="SMR" id="B4URD6"/>
<dbReference type="GlyCosmos" id="B4URD6">
    <property type="glycosylation" value="9 sites, No reported glycans"/>
</dbReference>
<dbReference type="PRO" id="PR:B4URD6"/>
<dbReference type="Proteomes" id="UP000008081">
    <property type="component" value="Genome"/>
</dbReference>
<dbReference type="GO" id="GO:0020002">
    <property type="term" value="C:host cell plasma membrane"/>
    <property type="evidence" value="ECO:0007669"/>
    <property type="project" value="UniProtKB-SubCell"/>
</dbReference>
<dbReference type="GO" id="GO:0016020">
    <property type="term" value="C:membrane"/>
    <property type="evidence" value="ECO:0007669"/>
    <property type="project" value="UniProtKB-UniRule"/>
</dbReference>
<dbReference type="GO" id="GO:0019031">
    <property type="term" value="C:viral envelope"/>
    <property type="evidence" value="ECO:0007669"/>
    <property type="project" value="UniProtKB-UniRule"/>
</dbReference>
<dbReference type="GO" id="GO:0055036">
    <property type="term" value="C:virion membrane"/>
    <property type="evidence" value="ECO:0007669"/>
    <property type="project" value="UniProtKB-SubCell"/>
</dbReference>
<dbReference type="GO" id="GO:0046789">
    <property type="term" value="F:host cell surface receptor binding"/>
    <property type="evidence" value="ECO:0007669"/>
    <property type="project" value="UniProtKB-UniRule"/>
</dbReference>
<dbReference type="GO" id="GO:0075512">
    <property type="term" value="P:clathrin-dependent endocytosis of virus by host cell"/>
    <property type="evidence" value="ECO:0007669"/>
    <property type="project" value="UniProtKB-UniRule"/>
</dbReference>
<dbReference type="GO" id="GO:0039654">
    <property type="term" value="P:fusion of virus membrane with host endosome membrane"/>
    <property type="evidence" value="ECO:0007669"/>
    <property type="project" value="UniProtKB-UniRule"/>
</dbReference>
<dbReference type="GO" id="GO:0019064">
    <property type="term" value="P:fusion of virus membrane with host plasma membrane"/>
    <property type="evidence" value="ECO:0007669"/>
    <property type="project" value="InterPro"/>
</dbReference>
<dbReference type="GO" id="GO:0046761">
    <property type="term" value="P:viral budding from plasma membrane"/>
    <property type="evidence" value="ECO:0007669"/>
    <property type="project" value="UniProtKB-UniRule"/>
</dbReference>
<dbReference type="GO" id="GO:0019062">
    <property type="term" value="P:virion attachment to host cell"/>
    <property type="evidence" value="ECO:0007669"/>
    <property type="project" value="UniProtKB-KW"/>
</dbReference>
<dbReference type="FunFam" id="3.90.20.10:FF:000002">
    <property type="entry name" value="Hemagglutinin"/>
    <property type="match status" value="1"/>
</dbReference>
<dbReference type="Gene3D" id="3.90.20.10">
    <property type="match status" value="1"/>
</dbReference>
<dbReference type="Gene3D" id="3.90.209.20">
    <property type="match status" value="1"/>
</dbReference>
<dbReference type="Gene3D" id="2.10.77.10">
    <property type="entry name" value="Hemagglutinin Chain A, Domain 2"/>
    <property type="match status" value="1"/>
</dbReference>
<dbReference type="HAMAP" id="MF_04072">
    <property type="entry name" value="INFV_HEMA"/>
    <property type="match status" value="1"/>
</dbReference>
<dbReference type="InterPro" id="IPR008980">
    <property type="entry name" value="Capsid_hemagglutn"/>
</dbReference>
<dbReference type="InterPro" id="IPR013828">
    <property type="entry name" value="Hemagglutn_HA1_a/b_dom_sf"/>
</dbReference>
<dbReference type="InterPro" id="IPR000149">
    <property type="entry name" value="Hemagglutn_influenz_A"/>
</dbReference>
<dbReference type="InterPro" id="IPR001364">
    <property type="entry name" value="Hemagglutn_influenz_A/B"/>
</dbReference>
<dbReference type="Pfam" id="PF00509">
    <property type="entry name" value="Hemagglutinin"/>
    <property type="match status" value="1"/>
</dbReference>
<dbReference type="PRINTS" id="PR00330">
    <property type="entry name" value="HEMAGGLUTN1"/>
</dbReference>
<dbReference type="PRINTS" id="PR00329">
    <property type="entry name" value="HEMAGGLUTN12"/>
</dbReference>
<dbReference type="SUPFAM" id="SSF58064">
    <property type="entry name" value="Influenza hemagglutinin (stalk)"/>
    <property type="match status" value="1"/>
</dbReference>
<dbReference type="SUPFAM" id="SSF49818">
    <property type="entry name" value="Viral protein domain"/>
    <property type="match status" value="1"/>
</dbReference>
<organism>
    <name type="scientific">Influenza A virus (strain A/Russia:St.Petersburg/8/2006 H1N1)</name>
    <dbReference type="NCBI Taxonomy" id="518998"/>
    <lineage>
        <taxon>Viruses</taxon>
        <taxon>Riboviria</taxon>
        <taxon>Orthornavirae</taxon>
        <taxon>Negarnaviricota</taxon>
        <taxon>Polyploviricotina</taxon>
        <taxon>Insthoviricetes</taxon>
        <taxon>Articulavirales</taxon>
        <taxon>Orthomyxoviridae</taxon>
        <taxon>Alphainfluenzavirus</taxon>
        <taxon>Alphainfluenzavirus influenzae</taxon>
        <taxon>Influenza A virus</taxon>
    </lineage>
</organism>
<protein>
    <recommendedName>
        <fullName evidence="2">Hemagglutinin</fullName>
    </recommendedName>
    <component>
        <recommendedName>
            <fullName evidence="2">Hemagglutinin HA1 chain</fullName>
        </recommendedName>
    </component>
    <component>
        <recommendedName>
            <fullName evidence="2">Hemagglutinin HA2 chain</fullName>
        </recommendedName>
    </component>
</protein>
<proteinExistence type="inferred from homology"/>